<sequence length="218" mass="24474">MTLSRVHQQVIAFPAAKTDTMSYLPDPASINNHQIPTSSKVSYLTGKGKSMLRKKKTDSFTNGARDQDKLGPKLTETVKRKLSLGAKILQMGGLEKIYKRLFKVCDQEKLFKAYQCYLSTTAGPIAGLLFISSKKIAFCSERSIKVASPQGVLSRVHYKVSIPLCKINGVNQSQNTKKPSQKYLEIVTIDNFDFWFMGFVSYQKAFNCLEKALNNDEQ</sequence>
<accession>Q9FMW6</accession>
<accession>F4KCV4</accession>
<accession>Q8GWB9</accession>
<proteinExistence type="evidence at transcript level"/>
<gene>
    <name type="ordered locus">At5g23350</name>
    <name type="ORF">MKD15.21</name>
</gene>
<feature type="chain" id="PRO_0000311670" description="GEM-like protein 6">
    <location>
        <begin position="1"/>
        <end position="218"/>
    </location>
</feature>
<feature type="domain" description="GRAM">
    <location>
        <begin position="96"/>
        <end position="174"/>
    </location>
</feature>
<protein>
    <recommendedName>
        <fullName>GEM-like protein 6</fullName>
    </recommendedName>
</protein>
<evidence type="ECO:0000305" key="1"/>
<dbReference type="EMBL" id="AB007648">
    <property type="protein sequence ID" value="BAB11190.1"/>
    <property type="status" value="ALT_SEQ"/>
    <property type="molecule type" value="Genomic_DNA"/>
</dbReference>
<dbReference type="EMBL" id="CP002688">
    <property type="protein sequence ID" value="AED93154.2"/>
    <property type="molecule type" value="Genomic_DNA"/>
</dbReference>
<dbReference type="EMBL" id="AK118949">
    <property type="protein sequence ID" value="BAC43529.1"/>
    <property type="molecule type" value="mRNA"/>
</dbReference>
<dbReference type="RefSeq" id="NP_197726.2">
    <property type="nucleotide sequence ID" value="NM_122241.4"/>
</dbReference>
<dbReference type="SMR" id="Q9FMW6"/>
<dbReference type="FunCoup" id="Q9FMW6">
    <property type="interactions" value="44"/>
</dbReference>
<dbReference type="STRING" id="3702.Q9FMW6"/>
<dbReference type="PaxDb" id="3702-AT5G23350.1"/>
<dbReference type="EnsemblPlants" id="AT5G23350.1">
    <property type="protein sequence ID" value="AT5G23350.1"/>
    <property type="gene ID" value="AT5G23350"/>
</dbReference>
<dbReference type="GeneID" id="832399"/>
<dbReference type="Gramene" id="AT5G23350.1">
    <property type="protein sequence ID" value="AT5G23350.1"/>
    <property type="gene ID" value="AT5G23350"/>
</dbReference>
<dbReference type="KEGG" id="ath:AT5G23350"/>
<dbReference type="Araport" id="AT5G23350"/>
<dbReference type="TAIR" id="AT5G23350"/>
<dbReference type="eggNOG" id="ENOG502QUKI">
    <property type="taxonomic scope" value="Eukaryota"/>
</dbReference>
<dbReference type="HOGENOM" id="CLU_063785_0_1_1"/>
<dbReference type="InParanoid" id="Q9FMW6"/>
<dbReference type="OMA" id="DIWLMGF"/>
<dbReference type="PhylomeDB" id="Q9FMW6"/>
<dbReference type="PRO" id="PR:Q9FMW6"/>
<dbReference type="Proteomes" id="UP000006548">
    <property type="component" value="Chromosome 5"/>
</dbReference>
<dbReference type="ExpressionAtlas" id="Q9FMW6">
    <property type="expression patterns" value="baseline and differential"/>
</dbReference>
<dbReference type="CDD" id="cd13222">
    <property type="entry name" value="PH-GRAM_GEM"/>
    <property type="match status" value="1"/>
</dbReference>
<dbReference type="Gene3D" id="2.30.29.30">
    <property type="entry name" value="Pleckstrin-homology domain (PH domain)/Phosphotyrosine-binding domain (PTB)"/>
    <property type="match status" value="1"/>
</dbReference>
<dbReference type="InterPro" id="IPR037848">
    <property type="entry name" value="GEM-like"/>
</dbReference>
<dbReference type="InterPro" id="IPR004182">
    <property type="entry name" value="GRAM"/>
</dbReference>
<dbReference type="InterPro" id="IPR011993">
    <property type="entry name" value="PH-like_dom_sf"/>
</dbReference>
<dbReference type="PANTHER" id="PTHR31969">
    <property type="entry name" value="GEM-LIKE PROTEIN 2"/>
    <property type="match status" value="1"/>
</dbReference>
<dbReference type="Pfam" id="PF02893">
    <property type="entry name" value="GRAM"/>
    <property type="match status" value="1"/>
</dbReference>
<dbReference type="SMART" id="SM00568">
    <property type="entry name" value="GRAM"/>
    <property type="match status" value="1"/>
</dbReference>
<comment type="similarity">
    <text evidence="1">Belongs to the GEM family.</text>
</comment>
<comment type="sequence caution" evidence="1">
    <conflict type="erroneous gene model prediction">
        <sequence resource="EMBL-CDS" id="BAB11190"/>
    </conflict>
</comment>
<keyword id="KW-1185">Reference proteome</keyword>
<organism>
    <name type="scientific">Arabidopsis thaliana</name>
    <name type="common">Mouse-ear cress</name>
    <dbReference type="NCBI Taxonomy" id="3702"/>
    <lineage>
        <taxon>Eukaryota</taxon>
        <taxon>Viridiplantae</taxon>
        <taxon>Streptophyta</taxon>
        <taxon>Embryophyta</taxon>
        <taxon>Tracheophyta</taxon>
        <taxon>Spermatophyta</taxon>
        <taxon>Magnoliopsida</taxon>
        <taxon>eudicotyledons</taxon>
        <taxon>Gunneridae</taxon>
        <taxon>Pentapetalae</taxon>
        <taxon>rosids</taxon>
        <taxon>malvids</taxon>
        <taxon>Brassicales</taxon>
        <taxon>Brassicaceae</taxon>
        <taxon>Camelineae</taxon>
        <taxon>Arabidopsis</taxon>
    </lineage>
</organism>
<reference key="1">
    <citation type="journal article" date="1997" name="DNA Res.">
        <title>Structural analysis of Arabidopsis thaliana chromosome 5. III. Sequence features of the regions of 1,191,918 bp covered by seventeen physically assigned P1 clones.</title>
        <authorList>
            <person name="Nakamura Y."/>
            <person name="Sato S."/>
            <person name="Kaneko T."/>
            <person name="Kotani H."/>
            <person name="Asamizu E."/>
            <person name="Miyajima N."/>
            <person name="Tabata S."/>
        </authorList>
    </citation>
    <scope>NUCLEOTIDE SEQUENCE [LARGE SCALE GENOMIC DNA]</scope>
    <source>
        <strain>cv. Columbia</strain>
    </source>
</reference>
<reference key="2">
    <citation type="journal article" date="2017" name="Plant J.">
        <title>Araport11: a complete reannotation of the Arabidopsis thaliana reference genome.</title>
        <authorList>
            <person name="Cheng C.Y."/>
            <person name="Krishnakumar V."/>
            <person name="Chan A.P."/>
            <person name="Thibaud-Nissen F."/>
            <person name="Schobel S."/>
            <person name="Town C.D."/>
        </authorList>
    </citation>
    <scope>GENOME REANNOTATION</scope>
    <source>
        <strain>cv. Columbia</strain>
    </source>
</reference>
<reference key="3">
    <citation type="journal article" date="2002" name="Science">
        <title>Functional annotation of a full-length Arabidopsis cDNA collection.</title>
        <authorList>
            <person name="Seki M."/>
            <person name="Narusaka M."/>
            <person name="Kamiya A."/>
            <person name="Ishida J."/>
            <person name="Satou M."/>
            <person name="Sakurai T."/>
            <person name="Nakajima M."/>
            <person name="Enju A."/>
            <person name="Akiyama K."/>
            <person name="Oono Y."/>
            <person name="Muramatsu M."/>
            <person name="Hayashizaki Y."/>
            <person name="Kawai J."/>
            <person name="Carninci P."/>
            <person name="Itoh M."/>
            <person name="Ishii Y."/>
            <person name="Arakawa T."/>
            <person name="Shibata K."/>
            <person name="Shinagawa A."/>
            <person name="Shinozaki K."/>
        </authorList>
    </citation>
    <scope>NUCLEOTIDE SEQUENCE [LARGE SCALE MRNA]</scope>
    <source>
        <strain>cv. Columbia</strain>
    </source>
</reference>
<name>GEML6_ARATH</name>